<name>AFUB_ECOLI</name>
<reference key="1">
    <citation type="journal article" date="1997" name="Science">
        <title>The complete genome sequence of Escherichia coli K-12.</title>
        <authorList>
            <person name="Blattner F.R."/>
            <person name="Plunkett G. III"/>
            <person name="Bloch C.A."/>
            <person name="Perna N.T."/>
            <person name="Burland V."/>
            <person name="Riley M."/>
            <person name="Collado-Vides J."/>
            <person name="Glasner J.D."/>
            <person name="Rode C.K."/>
            <person name="Mayhew G.F."/>
            <person name="Gregor J."/>
            <person name="Davis N.W."/>
            <person name="Kirkpatrick H.A."/>
            <person name="Goeden M.A."/>
            <person name="Rose D.J."/>
            <person name="Mau B."/>
            <person name="Shao Y."/>
        </authorList>
    </citation>
    <scope>NUCLEOTIDE SEQUENCE [LARGE SCALE GENOMIC DNA]</scope>
    <source>
        <strain>K12 / MG1655 / ATCC 47076</strain>
    </source>
</reference>
<reference key="2">
    <citation type="journal article" date="2006" name="Mol. Syst. Biol.">
        <title>Highly accurate genome sequences of Escherichia coli K-12 strains MG1655 and W3110.</title>
        <authorList>
            <person name="Hayashi K."/>
            <person name="Morooka N."/>
            <person name="Yamamoto Y."/>
            <person name="Fujita K."/>
            <person name="Isono K."/>
            <person name="Choi S."/>
            <person name="Ohtsubo E."/>
            <person name="Baba T."/>
            <person name="Wanner B.L."/>
            <person name="Mori H."/>
            <person name="Horiuchi T."/>
        </authorList>
    </citation>
    <scope>NUCLEOTIDE SEQUENCE [LARGE SCALE GENOMIC DNA]</scope>
    <source>
        <strain>K12 / W3110 / ATCC 27325 / DSM 5911</strain>
    </source>
</reference>
<reference key="3">
    <citation type="journal article" date="2005" name="Science">
        <title>Global topology analysis of the Escherichia coli inner membrane proteome.</title>
        <authorList>
            <person name="Daley D.O."/>
            <person name="Rapp M."/>
            <person name="Granseth E."/>
            <person name="Melen K."/>
            <person name="Drew D."/>
            <person name="von Heijne G."/>
        </authorList>
    </citation>
    <scope>SUBCELLULAR LOCATION</scope>
    <scope>TOPOLOGY [LARGE SCALE ANALYSIS]</scope>
    <source>
        <strain>K12 / MG1655 / ATCC 47076</strain>
    </source>
</reference>
<comment type="function">
    <text evidence="4">A severely truncated paralog of the AfuB uptake protein, homologous only to the last 20% of the intact protein in Actinobacillus.</text>
</comment>
<comment type="subcellular location">
    <subcellularLocation>
        <location evidence="3">Cell inner membrane</location>
        <topology>Multi-pass membrane protein</topology>
    </subcellularLocation>
    <text evidence="3">When overexpressed using vectors that provide a promoter and ribosome binding site (PubMed:15919996).</text>
</comment>
<comment type="similarity">
    <text evidence="4">Belongs to the binding-protein-dependent transport system permease family. FbpB subfamily.</text>
</comment>
<comment type="caution">
    <text evidence="4">Could be the product of a pseudogene. The original protein is truncated by an IS1 element which is inserted right before residue 6. What was the original N-terminal of this protein is not known. Other genes of the operon were presumably also deleted by this IS1 event.</text>
</comment>
<accession>P75681</accession>
<accession>Q9XB40</accession>
<feature type="chain" id="PRO_0000060016" description="Putative ferric transport system permease-like protein AfuB">
    <location>
        <begin position="1"/>
        <end position="120"/>
    </location>
</feature>
<feature type="topological domain" description="Cytoplasmic" evidence="1">
    <location>
        <begin position="1"/>
        <end position="38"/>
    </location>
</feature>
<feature type="transmembrane region" description="Helical" evidence="2">
    <location>
        <begin position="39"/>
        <end position="59"/>
    </location>
</feature>
<feature type="topological domain" description="Periplasmic" evidence="1">
    <location>
        <begin position="60"/>
        <end position="81"/>
    </location>
</feature>
<feature type="transmembrane region" description="Helical" evidence="2">
    <location>
        <begin position="82"/>
        <end position="102"/>
    </location>
</feature>
<feature type="topological domain" description="Cytoplasmic" evidence="1 5">
    <location>
        <begin position="103"/>
        <end position="120"/>
    </location>
</feature>
<feature type="domain" description="ABC transmembrane type-1" evidence="2">
    <location>
        <begin position="1"/>
        <end position="102"/>
    </location>
</feature>
<organism>
    <name type="scientific">Escherichia coli (strain K12)</name>
    <dbReference type="NCBI Taxonomy" id="83333"/>
    <lineage>
        <taxon>Bacteria</taxon>
        <taxon>Pseudomonadati</taxon>
        <taxon>Pseudomonadota</taxon>
        <taxon>Gammaproteobacteria</taxon>
        <taxon>Enterobacterales</taxon>
        <taxon>Enterobacteriaceae</taxon>
        <taxon>Escherichia</taxon>
    </lineage>
</organism>
<evidence type="ECO:0000255" key="1"/>
<evidence type="ECO:0000255" key="2">
    <source>
        <dbReference type="PROSITE-ProRule" id="PRU00441"/>
    </source>
</evidence>
<evidence type="ECO:0000269" key="3">
    <source>
    </source>
</evidence>
<evidence type="ECO:0000305" key="4"/>
<evidence type="ECO:0000305" key="5">
    <source>
    </source>
</evidence>
<proteinExistence type="uncertain"/>
<gene>
    <name type="primary">afuB</name>
    <name type="synonym">fbpB</name>
    <name type="ordered locus">b0263</name>
    <name type="ordered locus">JW0255</name>
</gene>
<keyword id="KW-0997">Cell inner membrane</keyword>
<keyword id="KW-1003">Cell membrane</keyword>
<keyword id="KW-0472">Membrane</keyword>
<keyword id="KW-1185">Reference proteome</keyword>
<keyword id="KW-0812">Transmembrane</keyword>
<keyword id="KW-1133">Transmembrane helix</keyword>
<protein>
    <recommendedName>
        <fullName>Putative ferric transport system permease-like protein AfuB</fullName>
    </recommendedName>
</protein>
<dbReference type="EMBL" id="U00096">
    <property type="status" value="NOT_ANNOTATED_CDS"/>
    <property type="molecule type" value="Genomic_DNA"/>
</dbReference>
<dbReference type="EMBL" id="AP009048">
    <property type="protein sequence ID" value="BAA77931.2"/>
    <property type="molecule type" value="Genomic_DNA"/>
</dbReference>
<dbReference type="PIR" id="G64751">
    <property type="entry name" value="G64751"/>
</dbReference>
<dbReference type="SMR" id="P75681"/>
<dbReference type="BioGRID" id="4263057">
    <property type="interactions" value="4"/>
</dbReference>
<dbReference type="FunCoup" id="P75681">
    <property type="interactions" value="20"/>
</dbReference>
<dbReference type="KEGG" id="ecj:JW0255"/>
<dbReference type="KEGG" id="ecoc:C3026_01270"/>
<dbReference type="PATRIC" id="fig|83333.103.peg.1017"/>
<dbReference type="EchoBASE" id="EB4025"/>
<dbReference type="eggNOG" id="COG1178">
    <property type="taxonomic scope" value="Bacteria"/>
</dbReference>
<dbReference type="HOGENOM" id="CLU_2046117_0_0_6"/>
<dbReference type="InParanoid" id="P75681"/>
<dbReference type="PhylomeDB" id="P75681"/>
<dbReference type="Proteomes" id="UP000000625">
    <property type="component" value="Chromosome"/>
</dbReference>
<dbReference type="GO" id="GO:0005886">
    <property type="term" value="C:plasma membrane"/>
    <property type="evidence" value="ECO:0007669"/>
    <property type="project" value="UniProtKB-SubCell"/>
</dbReference>
<dbReference type="GO" id="GO:0055085">
    <property type="term" value="P:transmembrane transport"/>
    <property type="evidence" value="ECO:0007669"/>
    <property type="project" value="InterPro"/>
</dbReference>
<dbReference type="CDD" id="cd06261">
    <property type="entry name" value="TM_PBP2"/>
    <property type="match status" value="1"/>
</dbReference>
<dbReference type="Gene3D" id="1.10.3720.10">
    <property type="entry name" value="MetI-like"/>
    <property type="match status" value="1"/>
</dbReference>
<dbReference type="InterPro" id="IPR000515">
    <property type="entry name" value="MetI-like"/>
</dbReference>
<dbReference type="InterPro" id="IPR035906">
    <property type="entry name" value="MetI-like_sf"/>
</dbReference>
<dbReference type="PANTHER" id="PTHR43496:SF1">
    <property type="entry name" value="POLYGALACTURONAN_RHAMNOGALACTURONAN TRANSPORT SYSTEM PERMEASE PROTEIN YTEP"/>
    <property type="match status" value="1"/>
</dbReference>
<dbReference type="PANTHER" id="PTHR43496">
    <property type="entry name" value="PROTEIN LPLB"/>
    <property type="match status" value="1"/>
</dbReference>
<dbReference type="Pfam" id="PF00528">
    <property type="entry name" value="BPD_transp_1"/>
    <property type="match status" value="1"/>
</dbReference>
<dbReference type="SUPFAM" id="SSF161098">
    <property type="entry name" value="MetI-like"/>
    <property type="match status" value="1"/>
</dbReference>
<dbReference type="PROSITE" id="PS50928">
    <property type="entry name" value="ABC_TM1"/>
    <property type="match status" value="1"/>
</dbReference>
<sequence length="120" mass="13093">MESLPGQIDKSLDEASLSLRAGSLRTITHILLPLLRPAILSALIYSFVRAITTVSAIVFLVTPDTRVATAYILNRVEDGEYGVAIAYGSILIVVMLAIIFIFDWLIGESRTSRSKAKNQA</sequence>